<name>PCKA_ECOLC</name>
<organism>
    <name type="scientific">Escherichia coli (strain ATCC 8739 / DSM 1576 / NBRC 3972 / NCIMB 8545 / WDCM 00012 / Crooks)</name>
    <dbReference type="NCBI Taxonomy" id="481805"/>
    <lineage>
        <taxon>Bacteria</taxon>
        <taxon>Pseudomonadati</taxon>
        <taxon>Pseudomonadota</taxon>
        <taxon>Gammaproteobacteria</taxon>
        <taxon>Enterobacterales</taxon>
        <taxon>Enterobacteriaceae</taxon>
        <taxon>Escherichia</taxon>
    </lineage>
</organism>
<dbReference type="EC" id="4.1.1.49" evidence="1"/>
<dbReference type="EMBL" id="CP000946">
    <property type="protein sequence ID" value="ACA75988.1"/>
    <property type="molecule type" value="Genomic_DNA"/>
</dbReference>
<dbReference type="RefSeq" id="WP_001265681.1">
    <property type="nucleotide sequence ID" value="NZ_MTFT01000001.1"/>
</dbReference>
<dbReference type="SMR" id="B1IP62"/>
<dbReference type="KEGG" id="ecl:EcolC_0310"/>
<dbReference type="HOGENOM" id="CLU_018247_0_1_6"/>
<dbReference type="UniPathway" id="UPA00138"/>
<dbReference type="GO" id="GO:0005829">
    <property type="term" value="C:cytosol"/>
    <property type="evidence" value="ECO:0007669"/>
    <property type="project" value="TreeGrafter"/>
</dbReference>
<dbReference type="GO" id="GO:0005524">
    <property type="term" value="F:ATP binding"/>
    <property type="evidence" value="ECO:0007669"/>
    <property type="project" value="UniProtKB-UniRule"/>
</dbReference>
<dbReference type="GO" id="GO:0046872">
    <property type="term" value="F:metal ion binding"/>
    <property type="evidence" value="ECO:0007669"/>
    <property type="project" value="UniProtKB-KW"/>
</dbReference>
<dbReference type="GO" id="GO:0004612">
    <property type="term" value="F:phosphoenolpyruvate carboxykinase (ATP) activity"/>
    <property type="evidence" value="ECO:0007669"/>
    <property type="project" value="UniProtKB-UniRule"/>
</dbReference>
<dbReference type="GO" id="GO:0006094">
    <property type="term" value="P:gluconeogenesis"/>
    <property type="evidence" value="ECO:0007669"/>
    <property type="project" value="UniProtKB-UniRule"/>
</dbReference>
<dbReference type="CDD" id="cd00484">
    <property type="entry name" value="PEPCK_ATP"/>
    <property type="match status" value="1"/>
</dbReference>
<dbReference type="FunFam" id="2.170.8.10:FF:000001">
    <property type="entry name" value="Phosphoenolpyruvate carboxykinase (ATP)"/>
    <property type="match status" value="1"/>
</dbReference>
<dbReference type="FunFam" id="3.40.449.10:FF:000001">
    <property type="entry name" value="Phosphoenolpyruvate carboxykinase (ATP)"/>
    <property type="match status" value="1"/>
</dbReference>
<dbReference type="Gene3D" id="3.90.228.20">
    <property type="match status" value="1"/>
</dbReference>
<dbReference type="Gene3D" id="3.40.449.10">
    <property type="entry name" value="Phosphoenolpyruvate Carboxykinase, domain 1"/>
    <property type="match status" value="1"/>
</dbReference>
<dbReference type="Gene3D" id="2.170.8.10">
    <property type="entry name" value="Phosphoenolpyruvate Carboxykinase, domain 2"/>
    <property type="match status" value="1"/>
</dbReference>
<dbReference type="HAMAP" id="MF_00453">
    <property type="entry name" value="PEPCK_ATP"/>
    <property type="match status" value="1"/>
</dbReference>
<dbReference type="InterPro" id="IPR001272">
    <property type="entry name" value="PEP_carboxykinase_ATP"/>
</dbReference>
<dbReference type="InterPro" id="IPR013035">
    <property type="entry name" value="PEP_carboxykinase_C"/>
</dbReference>
<dbReference type="InterPro" id="IPR008210">
    <property type="entry name" value="PEP_carboxykinase_N"/>
</dbReference>
<dbReference type="InterPro" id="IPR015994">
    <property type="entry name" value="PEPCK_ATP_CS"/>
</dbReference>
<dbReference type="NCBIfam" id="TIGR00224">
    <property type="entry name" value="pckA"/>
    <property type="match status" value="1"/>
</dbReference>
<dbReference type="NCBIfam" id="NF006819">
    <property type="entry name" value="PRK09344.1-1"/>
    <property type="match status" value="1"/>
</dbReference>
<dbReference type="NCBIfam" id="NF006820">
    <property type="entry name" value="PRK09344.1-2"/>
    <property type="match status" value="1"/>
</dbReference>
<dbReference type="NCBIfam" id="NF006821">
    <property type="entry name" value="PRK09344.1-3"/>
    <property type="match status" value="1"/>
</dbReference>
<dbReference type="PANTHER" id="PTHR30031:SF0">
    <property type="entry name" value="PHOSPHOENOLPYRUVATE CARBOXYKINASE (ATP)"/>
    <property type="match status" value="1"/>
</dbReference>
<dbReference type="PANTHER" id="PTHR30031">
    <property type="entry name" value="PHOSPHOENOLPYRUVATE CARBOXYKINASE ATP"/>
    <property type="match status" value="1"/>
</dbReference>
<dbReference type="Pfam" id="PF01293">
    <property type="entry name" value="PEPCK_ATP"/>
    <property type="match status" value="1"/>
</dbReference>
<dbReference type="PIRSF" id="PIRSF006294">
    <property type="entry name" value="PEP_crbxkin"/>
    <property type="match status" value="1"/>
</dbReference>
<dbReference type="SUPFAM" id="SSF68923">
    <property type="entry name" value="PEP carboxykinase N-terminal domain"/>
    <property type="match status" value="1"/>
</dbReference>
<dbReference type="SUPFAM" id="SSF53795">
    <property type="entry name" value="PEP carboxykinase-like"/>
    <property type="match status" value="1"/>
</dbReference>
<dbReference type="PROSITE" id="PS00532">
    <property type="entry name" value="PEPCK_ATP"/>
    <property type="match status" value="1"/>
</dbReference>
<gene>
    <name evidence="1" type="primary">pckA</name>
    <name type="ordered locus">EcolC_0310</name>
</gene>
<proteinExistence type="inferred from homology"/>
<comment type="function">
    <text evidence="1">Involved in the gluconeogenesis. Catalyzes the conversion of oxaloacetate (OAA) to phosphoenolpyruvate (PEP) through direct phosphoryl transfer between the nucleoside triphosphate and OAA.</text>
</comment>
<comment type="catalytic activity">
    <reaction evidence="1">
        <text>oxaloacetate + ATP = phosphoenolpyruvate + ADP + CO2</text>
        <dbReference type="Rhea" id="RHEA:18617"/>
        <dbReference type="ChEBI" id="CHEBI:16452"/>
        <dbReference type="ChEBI" id="CHEBI:16526"/>
        <dbReference type="ChEBI" id="CHEBI:30616"/>
        <dbReference type="ChEBI" id="CHEBI:58702"/>
        <dbReference type="ChEBI" id="CHEBI:456216"/>
        <dbReference type="EC" id="4.1.1.49"/>
    </reaction>
</comment>
<comment type="cofactor">
    <cofactor evidence="1">
        <name>Mn(2+)</name>
        <dbReference type="ChEBI" id="CHEBI:29035"/>
    </cofactor>
    <text evidence="1">Binds 1 Mn(2+) ion per subunit.</text>
</comment>
<comment type="pathway">
    <text evidence="1">Carbohydrate biosynthesis; gluconeogenesis.</text>
</comment>
<comment type="subunit">
    <text evidence="1">Monomer.</text>
</comment>
<comment type="subcellular location">
    <subcellularLocation>
        <location evidence="1">Cytoplasm</location>
    </subcellularLocation>
</comment>
<comment type="similarity">
    <text evidence="1">Belongs to the phosphoenolpyruvate carboxykinase (ATP) family.</text>
</comment>
<sequence>MRVNNGLTPQELEAYGISDVHDIVYNPSYDLLYQEELDPSLTGYERGVLTNLGAVAVDTGIFTGRSPKDKYIVRDDTTRDTFWWADKGKGKNDNKPLSPETWQHLKGLVTRQLSGKRLFVVDAFCGANPDTRLSVRFITEVAWQAHFVKNMFIRPSDEELAGFKPDFIVMNGAKCTNPQWKEQGLNSENFVAFNLTERMQLIGGTWYGGEMKKGMFSMMNYLLPLKGIASMHCSANVGEKGDVAVFFGLSGTGKTTLSTDPKRRLIGDDEHGWDDDGVFNFEGGCYAKTIKLSKEAEPEIYNAIRRDALLENVTVREDGTIDFDDGSKTENTRVSYPIYHIDNIVKPVSKAGHATKVIFLTADAFGVLPPVSRLTADQTQYHFLSGFTAKLAGTERGITEPTPTFSACFGAAFLSLHPTQYAEVLVKRMQAAGAQAYLVNTGWNGTGKRISIKDTRAIIDAILNGSLDNAETFTLPMFNLAIPTELPGVDTKILDPRNTYASPEQWQEKAETLAKLFIDNFDKYTDTPAGAALVAAGPKL</sequence>
<feature type="chain" id="PRO_1000080995" description="Phosphoenolpyruvate carboxykinase (ATP)">
    <location>
        <begin position="1"/>
        <end position="540"/>
    </location>
</feature>
<feature type="binding site" evidence="1">
    <location>
        <position position="65"/>
    </location>
    <ligand>
        <name>substrate</name>
    </ligand>
</feature>
<feature type="binding site" evidence="1">
    <location>
        <position position="207"/>
    </location>
    <ligand>
        <name>substrate</name>
    </ligand>
</feature>
<feature type="binding site" evidence="1">
    <location>
        <position position="213"/>
    </location>
    <ligand>
        <name>ATP</name>
        <dbReference type="ChEBI" id="CHEBI:30616"/>
    </ligand>
</feature>
<feature type="binding site" evidence="1">
    <location>
        <position position="213"/>
    </location>
    <ligand>
        <name>Mn(2+)</name>
        <dbReference type="ChEBI" id="CHEBI:29035"/>
    </ligand>
</feature>
<feature type="binding site" evidence="1">
    <location>
        <position position="213"/>
    </location>
    <ligand>
        <name>substrate</name>
    </ligand>
</feature>
<feature type="binding site" evidence="1">
    <location>
        <position position="232"/>
    </location>
    <ligand>
        <name>ATP</name>
        <dbReference type="ChEBI" id="CHEBI:30616"/>
    </ligand>
</feature>
<feature type="binding site" evidence="1">
    <location>
        <position position="232"/>
    </location>
    <ligand>
        <name>Mn(2+)</name>
        <dbReference type="ChEBI" id="CHEBI:29035"/>
    </ligand>
</feature>
<feature type="binding site" evidence="1">
    <location>
        <begin position="248"/>
        <end position="256"/>
    </location>
    <ligand>
        <name>ATP</name>
        <dbReference type="ChEBI" id="CHEBI:30616"/>
    </ligand>
</feature>
<feature type="binding site" evidence="1">
    <location>
        <position position="269"/>
    </location>
    <ligand>
        <name>Mn(2+)</name>
        <dbReference type="ChEBI" id="CHEBI:29035"/>
    </ligand>
</feature>
<feature type="binding site" evidence="1">
    <location>
        <position position="297"/>
    </location>
    <ligand>
        <name>ATP</name>
        <dbReference type="ChEBI" id="CHEBI:30616"/>
    </ligand>
</feature>
<feature type="binding site" evidence="1">
    <location>
        <position position="333"/>
    </location>
    <ligand>
        <name>ATP</name>
        <dbReference type="ChEBI" id="CHEBI:30616"/>
    </ligand>
</feature>
<feature type="binding site" evidence="1">
    <location>
        <position position="333"/>
    </location>
    <ligand>
        <name>substrate</name>
    </ligand>
</feature>
<feature type="binding site" evidence="1">
    <location>
        <begin position="449"/>
        <end position="450"/>
    </location>
    <ligand>
        <name>ATP</name>
        <dbReference type="ChEBI" id="CHEBI:30616"/>
    </ligand>
</feature>
<feature type="binding site" evidence="1">
    <location>
        <position position="455"/>
    </location>
    <ligand>
        <name>ATP</name>
        <dbReference type="ChEBI" id="CHEBI:30616"/>
    </ligand>
</feature>
<feature type="modified residue" description="N6-acetyllysine" evidence="1">
    <location>
        <position position="87"/>
    </location>
</feature>
<feature type="modified residue" description="N6-acetyllysine" evidence="1">
    <location>
        <position position="523"/>
    </location>
</feature>
<keyword id="KW-0007">Acetylation</keyword>
<keyword id="KW-0067">ATP-binding</keyword>
<keyword id="KW-0963">Cytoplasm</keyword>
<keyword id="KW-0210">Decarboxylase</keyword>
<keyword id="KW-0312">Gluconeogenesis</keyword>
<keyword id="KW-0456">Lyase</keyword>
<keyword id="KW-0464">Manganese</keyword>
<keyword id="KW-0479">Metal-binding</keyword>
<keyword id="KW-0547">Nucleotide-binding</keyword>
<protein>
    <recommendedName>
        <fullName evidence="1">Phosphoenolpyruvate carboxykinase (ATP)</fullName>
        <shortName evidence="1">PCK</shortName>
        <shortName evidence="1">PEP carboxykinase</shortName>
        <shortName evidence="1">PEPCK</shortName>
        <ecNumber evidence="1">4.1.1.49</ecNumber>
    </recommendedName>
</protein>
<reference key="1">
    <citation type="submission" date="2008-02" db="EMBL/GenBank/DDBJ databases">
        <title>Complete sequence of Escherichia coli C str. ATCC 8739.</title>
        <authorList>
            <person name="Copeland A."/>
            <person name="Lucas S."/>
            <person name="Lapidus A."/>
            <person name="Glavina del Rio T."/>
            <person name="Dalin E."/>
            <person name="Tice H."/>
            <person name="Bruce D."/>
            <person name="Goodwin L."/>
            <person name="Pitluck S."/>
            <person name="Kiss H."/>
            <person name="Brettin T."/>
            <person name="Detter J.C."/>
            <person name="Han C."/>
            <person name="Kuske C.R."/>
            <person name="Schmutz J."/>
            <person name="Larimer F."/>
            <person name="Land M."/>
            <person name="Hauser L."/>
            <person name="Kyrpides N."/>
            <person name="Mikhailova N."/>
            <person name="Ingram L."/>
            <person name="Richardson P."/>
        </authorList>
    </citation>
    <scope>NUCLEOTIDE SEQUENCE [LARGE SCALE GENOMIC DNA]</scope>
    <source>
        <strain>ATCC 8739 / DSM 1576 / NBRC 3972 / NCIMB 8545 / WDCM 00012 / Crooks</strain>
    </source>
</reference>
<accession>B1IP62</accession>
<evidence type="ECO:0000255" key="1">
    <source>
        <dbReference type="HAMAP-Rule" id="MF_00453"/>
    </source>
</evidence>